<keyword id="KW-0903">Direct protein sequencing</keyword>
<keyword id="KW-0539">Nucleus</keyword>
<keyword id="KW-0597">Phosphoprotein</keyword>
<keyword id="KW-1185">Reference proteome</keyword>
<keyword id="KW-0804">Transcription</keyword>
<keyword id="KW-0805">Transcription regulation</keyword>
<proteinExistence type="evidence at protein level"/>
<gene>
    <name type="primary">Taf2</name>
    <name type="synonym">TAF150</name>
    <name type="ORF">CG6711</name>
</gene>
<organism>
    <name type="scientific">Drosophila melanogaster</name>
    <name type="common">Fruit fly</name>
    <dbReference type="NCBI Taxonomy" id="7227"/>
    <lineage>
        <taxon>Eukaryota</taxon>
        <taxon>Metazoa</taxon>
        <taxon>Ecdysozoa</taxon>
        <taxon>Arthropoda</taxon>
        <taxon>Hexapoda</taxon>
        <taxon>Insecta</taxon>
        <taxon>Pterygota</taxon>
        <taxon>Neoptera</taxon>
        <taxon>Endopterygota</taxon>
        <taxon>Diptera</taxon>
        <taxon>Brachycera</taxon>
        <taxon>Muscomorpha</taxon>
        <taxon>Ephydroidea</taxon>
        <taxon>Drosophilidae</taxon>
        <taxon>Drosophila</taxon>
        <taxon>Sophophora</taxon>
    </lineage>
</organism>
<protein>
    <recommendedName>
        <fullName>Transcription initiation factor TFIID subunit 2</fullName>
    </recommendedName>
    <alternativeName>
        <fullName>Transcription initiation factor TFIID 150 kDa subunit</fullName>
        <shortName>TAF(II)150</shortName>
        <shortName>TAFII-150</shortName>
        <shortName>TAFII150</shortName>
    </alternativeName>
</protein>
<reference key="1">
    <citation type="journal article" date="1994" name="Science">
        <title>Drosophila TAFII150: similarity to yeast gene TSM-1 and specific binding to core promoter DNA.</title>
        <authorList>
            <person name="Verrijzer C.P."/>
            <person name="Yokomori K."/>
            <person name="Chen J.-L."/>
            <person name="Tjian R."/>
        </authorList>
    </citation>
    <scope>NUCLEOTIDE SEQUENCE [MRNA]</scope>
    <scope>PARTIAL PROTEIN SEQUENCE</scope>
    <scope>FUNCTION</scope>
    <scope>INTERACTION WITH TBP AND TAF1</scope>
    <source>
        <tissue>Embryo</tissue>
    </source>
</reference>
<reference key="2">
    <citation type="journal article" date="2000" name="Science">
        <title>The genome sequence of Drosophila melanogaster.</title>
        <authorList>
            <person name="Adams M.D."/>
            <person name="Celniker S.E."/>
            <person name="Holt R.A."/>
            <person name="Evans C.A."/>
            <person name="Gocayne J.D."/>
            <person name="Amanatides P.G."/>
            <person name="Scherer S.E."/>
            <person name="Li P.W."/>
            <person name="Hoskins R.A."/>
            <person name="Galle R.F."/>
            <person name="George R.A."/>
            <person name="Lewis S.E."/>
            <person name="Richards S."/>
            <person name="Ashburner M."/>
            <person name="Henderson S.N."/>
            <person name="Sutton G.G."/>
            <person name="Wortman J.R."/>
            <person name="Yandell M.D."/>
            <person name="Zhang Q."/>
            <person name="Chen L.X."/>
            <person name="Brandon R.C."/>
            <person name="Rogers Y.-H.C."/>
            <person name="Blazej R.G."/>
            <person name="Champe M."/>
            <person name="Pfeiffer B.D."/>
            <person name="Wan K.H."/>
            <person name="Doyle C."/>
            <person name="Baxter E.G."/>
            <person name="Helt G."/>
            <person name="Nelson C.R."/>
            <person name="Miklos G.L.G."/>
            <person name="Abril J.F."/>
            <person name="Agbayani A."/>
            <person name="An H.-J."/>
            <person name="Andrews-Pfannkoch C."/>
            <person name="Baldwin D."/>
            <person name="Ballew R.M."/>
            <person name="Basu A."/>
            <person name="Baxendale J."/>
            <person name="Bayraktaroglu L."/>
            <person name="Beasley E.M."/>
            <person name="Beeson K.Y."/>
            <person name="Benos P.V."/>
            <person name="Berman B.P."/>
            <person name="Bhandari D."/>
            <person name="Bolshakov S."/>
            <person name="Borkova D."/>
            <person name="Botchan M.R."/>
            <person name="Bouck J."/>
            <person name="Brokstein P."/>
            <person name="Brottier P."/>
            <person name="Burtis K.C."/>
            <person name="Busam D.A."/>
            <person name="Butler H."/>
            <person name="Cadieu E."/>
            <person name="Center A."/>
            <person name="Chandra I."/>
            <person name="Cherry J.M."/>
            <person name="Cawley S."/>
            <person name="Dahlke C."/>
            <person name="Davenport L.B."/>
            <person name="Davies P."/>
            <person name="de Pablos B."/>
            <person name="Delcher A."/>
            <person name="Deng Z."/>
            <person name="Mays A.D."/>
            <person name="Dew I."/>
            <person name="Dietz S.M."/>
            <person name="Dodson K."/>
            <person name="Doup L.E."/>
            <person name="Downes M."/>
            <person name="Dugan-Rocha S."/>
            <person name="Dunkov B.C."/>
            <person name="Dunn P."/>
            <person name="Durbin K.J."/>
            <person name="Evangelista C.C."/>
            <person name="Ferraz C."/>
            <person name="Ferriera S."/>
            <person name="Fleischmann W."/>
            <person name="Fosler C."/>
            <person name="Gabrielian A.E."/>
            <person name="Garg N.S."/>
            <person name="Gelbart W.M."/>
            <person name="Glasser K."/>
            <person name="Glodek A."/>
            <person name="Gong F."/>
            <person name="Gorrell J.H."/>
            <person name="Gu Z."/>
            <person name="Guan P."/>
            <person name="Harris M."/>
            <person name="Harris N.L."/>
            <person name="Harvey D.A."/>
            <person name="Heiman T.J."/>
            <person name="Hernandez J.R."/>
            <person name="Houck J."/>
            <person name="Hostin D."/>
            <person name="Houston K.A."/>
            <person name="Howland T.J."/>
            <person name="Wei M.-H."/>
            <person name="Ibegwam C."/>
            <person name="Jalali M."/>
            <person name="Kalush F."/>
            <person name="Karpen G.H."/>
            <person name="Ke Z."/>
            <person name="Kennison J.A."/>
            <person name="Ketchum K.A."/>
            <person name="Kimmel B.E."/>
            <person name="Kodira C.D."/>
            <person name="Kraft C.L."/>
            <person name="Kravitz S."/>
            <person name="Kulp D."/>
            <person name="Lai Z."/>
            <person name="Lasko P."/>
            <person name="Lei Y."/>
            <person name="Levitsky A.A."/>
            <person name="Li J.H."/>
            <person name="Li Z."/>
            <person name="Liang Y."/>
            <person name="Lin X."/>
            <person name="Liu X."/>
            <person name="Mattei B."/>
            <person name="McIntosh T.C."/>
            <person name="McLeod M.P."/>
            <person name="McPherson D."/>
            <person name="Merkulov G."/>
            <person name="Milshina N.V."/>
            <person name="Mobarry C."/>
            <person name="Morris J."/>
            <person name="Moshrefi A."/>
            <person name="Mount S.M."/>
            <person name="Moy M."/>
            <person name="Murphy B."/>
            <person name="Murphy L."/>
            <person name="Muzny D.M."/>
            <person name="Nelson D.L."/>
            <person name="Nelson D.R."/>
            <person name="Nelson K.A."/>
            <person name="Nixon K."/>
            <person name="Nusskern D.R."/>
            <person name="Pacleb J.M."/>
            <person name="Palazzolo M."/>
            <person name="Pittman G.S."/>
            <person name="Pan S."/>
            <person name="Pollard J."/>
            <person name="Puri V."/>
            <person name="Reese M.G."/>
            <person name="Reinert K."/>
            <person name="Remington K."/>
            <person name="Saunders R.D.C."/>
            <person name="Scheeler F."/>
            <person name="Shen H."/>
            <person name="Shue B.C."/>
            <person name="Siden-Kiamos I."/>
            <person name="Simpson M."/>
            <person name="Skupski M.P."/>
            <person name="Smith T.J."/>
            <person name="Spier E."/>
            <person name="Spradling A.C."/>
            <person name="Stapleton M."/>
            <person name="Strong R."/>
            <person name="Sun E."/>
            <person name="Svirskas R."/>
            <person name="Tector C."/>
            <person name="Turner R."/>
            <person name="Venter E."/>
            <person name="Wang A.H."/>
            <person name="Wang X."/>
            <person name="Wang Z.-Y."/>
            <person name="Wassarman D.A."/>
            <person name="Weinstock G.M."/>
            <person name="Weissenbach J."/>
            <person name="Williams S.M."/>
            <person name="Woodage T."/>
            <person name="Worley K.C."/>
            <person name="Wu D."/>
            <person name="Yang S."/>
            <person name="Yao Q.A."/>
            <person name="Ye J."/>
            <person name="Yeh R.-F."/>
            <person name="Zaveri J.S."/>
            <person name="Zhan M."/>
            <person name="Zhang G."/>
            <person name="Zhao Q."/>
            <person name="Zheng L."/>
            <person name="Zheng X.H."/>
            <person name="Zhong F.N."/>
            <person name="Zhong W."/>
            <person name="Zhou X."/>
            <person name="Zhu S.C."/>
            <person name="Zhu X."/>
            <person name="Smith H.O."/>
            <person name="Gibbs R.A."/>
            <person name="Myers E.W."/>
            <person name="Rubin G.M."/>
            <person name="Venter J.C."/>
        </authorList>
    </citation>
    <scope>NUCLEOTIDE SEQUENCE [LARGE SCALE GENOMIC DNA]</scope>
    <source>
        <strain>Berkeley</strain>
    </source>
</reference>
<reference key="3">
    <citation type="journal article" date="2002" name="Genome Biol.">
        <title>Annotation of the Drosophila melanogaster euchromatic genome: a systematic review.</title>
        <authorList>
            <person name="Misra S."/>
            <person name="Crosby M.A."/>
            <person name="Mungall C.J."/>
            <person name="Matthews B.B."/>
            <person name="Campbell K.S."/>
            <person name="Hradecky P."/>
            <person name="Huang Y."/>
            <person name="Kaminker J.S."/>
            <person name="Millburn G.H."/>
            <person name="Prochnik S.E."/>
            <person name="Smith C.D."/>
            <person name="Tupy J.L."/>
            <person name="Whitfield E.J."/>
            <person name="Bayraktaroglu L."/>
            <person name="Berman B.P."/>
            <person name="Bettencourt B.R."/>
            <person name="Celniker S.E."/>
            <person name="de Grey A.D.N.J."/>
            <person name="Drysdale R.A."/>
            <person name="Harris N.L."/>
            <person name="Richter J."/>
            <person name="Russo S."/>
            <person name="Schroeder A.J."/>
            <person name="Shu S.Q."/>
            <person name="Stapleton M."/>
            <person name="Yamada C."/>
            <person name="Ashburner M."/>
            <person name="Gelbart W.M."/>
            <person name="Rubin G.M."/>
            <person name="Lewis S.E."/>
        </authorList>
    </citation>
    <scope>GENOME REANNOTATION</scope>
    <source>
        <strain>Berkeley</strain>
    </source>
</reference>
<reference key="4">
    <citation type="journal article" date="2002" name="Genome Biol.">
        <title>A Drosophila full-length cDNA resource.</title>
        <authorList>
            <person name="Stapleton M."/>
            <person name="Carlson J.W."/>
            <person name="Brokstein P."/>
            <person name="Yu C."/>
            <person name="Champe M."/>
            <person name="George R.A."/>
            <person name="Guarin H."/>
            <person name="Kronmiller B."/>
            <person name="Pacleb J.M."/>
            <person name="Park S."/>
            <person name="Wan K.H."/>
            <person name="Rubin G.M."/>
            <person name="Celniker S.E."/>
        </authorList>
    </citation>
    <scope>NUCLEOTIDE SEQUENCE [LARGE SCALE MRNA]</scope>
    <source>
        <strain>Berkeley</strain>
        <tissue>Head</tissue>
    </source>
</reference>
<reference key="5">
    <citation type="journal article" date="1993" name="Genes Dev.">
        <title>Molecular cloning and characterization of dTAFII30 alpha and dTAFII30 beta: two small subunits of Drosophila TFIID.</title>
        <authorList>
            <person name="Yokomori K."/>
            <person name="Chen J.L."/>
            <person name="Admon A."/>
            <person name="Zhou S."/>
            <person name="Tjian R."/>
        </authorList>
    </citation>
    <scope>INTERACTION WITH TAF11 AND TAF12</scope>
</reference>
<reference key="6">
    <citation type="journal article" date="2008" name="J. Proteome Res.">
        <title>Phosphoproteome analysis of Drosophila melanogaster embryos.</title>
        <authorList>
            <person name="Zhai B."/>
            <person name="Villen J."/>
            <person name="Beausoleil S.A."/>
            <person name="Mintseris J."/>
            <person name="Gygi S.P."/>
        </authorList>
    </citation>
    <scope>PHOSPHORYLATION [LARGE SCALE ANALYSIS] AT SER-1135 AND SER-1136</scope>
    <scope>IDENTIFICATION BY MASS SPECTROMETRY</scope>
    <source>
        <tissue>Embryo</tissue>
    </source>
</reference>
<name>TAF2_DROME</name>
<feature type="chain" id="PRO_0000118866" description="Transcription initiation factor TFIID subunit 2">
    <location>
        <begin position="1"/>
        <end position="1221"/>
    </location>
</feature>
<feature type="region of interest" description="Binds to Tbp and Taf1">
    <location>
        <begin position="845"/>
        <end position="1213"/>
    </location>
</feature>
<feature type="region of interest" description="Disordered" evidence="1">
    <location>
        <begin position="1011"/>
        <end position="1044"/>
    </location>
</feature>
<feature type="region of interest" description="Disordered" evidence="1">
    <location>
        <begin position="1111"/>
        <end position="1221"/>
    </location>
</feature>
<feature type="region of interest" description="Highly charged">
    <location>
        <begin position="1138"/>
        <end position="1183"/>
    </location>
</feature>
<feature type="compositionally biased region" description="Polar residues" evidence="1">
    <location>
        <begin position="1027"/>
        <end position="1037"/>
    </location>
</feature>
<feature type="compositionally biased region" description="Basic and acidic residues" evidence="1">
    <location>
        <begin position="1129"/>
        <end position="1144"/>
    </location>
</feature>
<feature type="compositionally biased region" description="Basic residues" evidence="1">
    <location>
        <begin position="1150"/>
        <end position="1169"/>
    </location>
</feature>
<feature type="compositionally biased region" description="Basic and acidic residues" evidence="1">
    <location>
        <begin position="1170"/>
        <end position="1190"/>
    </location>
</feature>
<feature type="compositionally biased region" description="Low complexity" evidence="1">
    <location>
        <begin position="1206"/>
        <end position="1221"/>
    </location>
</feature>
<feature type="modified residue" description="Phosphoserine" evidence="2">
    <location>
        <position position="1135"/>
    </location>
</feature>
<feature type="modified residue" description="Phosphoserine" evidence="2">
    <location>
        <position position="1136"/>
    </location>
</feature>
<feature type="sequence conflict" description="In Ref. 1; CAA55830." evidence="5" ref="1">
    <original>R</original>
    <variation>S</variation>
    <location>
        <position position="53"/>
    </location>
</feature>
<feature type="sequence conflict" description="In Ref. 1; CAA55830." evidence="5" ref="1">
    <original>H</original>
    <variation>P</variation>
    <location>
        <position position="88"/>
    </location>
</feature>
<feature type="sequence conflict" description="In Ref. 1; AA sequence." evidence="5" ref="1">
    <original>DKDKERKDKDKRDPHISRLQARETATPDTLSSEDSSNSNSLPPMNLN</original>
    <variation>ERKDKDKRDPHISRLQAARQPLRTLSARRTVATAIACRP</variation>
    <location>
        <begin position="1175"/>
        <end position="1221"/>
    </location>
</feature>
<evidence type="ECO:0000256" key="1">
    <source>
        <dbReference type="SAM" id="MobiDB-lite"/>
    </source>
</evidence>
<evidence type="ECO:0000269" key="2">
    <source>
    </source>
</evidence>
<evidence type="ECO:0000269" key="3">
    <source>
    </source>
</evidence>
<evidence type="ECO:0000269" key="4">
    <source>
    </source>
</evidence>
<evidence type="ECO:0000305" key="5"/>
<comment type="function">
    <text evidence="3">TFIID is a multimeric protein complex that plays a central role in mediating promoter responses to various activators and repressors. An essential subunit binds to core promoter DNA.</text>
</comment>
<comment type="subunit">
    <text evidence="3 4">Belongs to the TFIID complex which is composed of TATA binding protein (Tbp) and a number of TBP-associated factors (TAFs). Interacts with Tbp, Taf1, Taf11 and Taf12.</text>
</comment>
<comment type="subcellular location">
    <subcellularLocation>
        <location>Nucleus</location>
    </subcellularLocation>
</comment>
<comment type="similarity">
    <text evidence="5">Belongs to the TAF2 family.</text>
</comment>
<dbReference type="EMBL" id="X79243">
    <property type="protein sequence ID" value="CAA55830.1"/>
    <property type="molecule type" value="mRNA"/>
</dbReference>
<dbReference type="EMBL" id="AE014296">
    <property type="protein sequence ID" value="AAF50190.2"/>
    <property type="molecule type" value="Genomic_DNA"/>
</dbReference>
<dbReference type="EMBL" id="AY070564">
    <property type="protein sequence ID" value="AAL48035.1"/>
    <property type="molecule type" value="mRNA"/>
</dbReference>
<dbReference type="PIR" id="A54063">
    <property type="entry name" value="A54063"/>
</dbReference>
<dbReference type="RefSeq" id="NP_001261668.1">
    <property type="nucleotide sequence ID" value="NM_001274739.1"/>
</dbReference>
<dbReference type="RefSeq" id="NP_729571.1">
    <property type="nucleotide sequence ID" value="NM_168387.3"/>
</dbReference>
<dbReference type="SMR" id="Q24325"/>
<dbReference type="BioGRID" id="64551">
    <property type="interactions" value="8"/>
</dbReference>
<dbReference type="DIP" id="DIP-255N"/>
<dbReference type="FunCoup" id="Q24325">
    <property type="interactions" value="2235"/>
</dbReference>
<dbReference type="IntAct" id="Q24325">
    <property type="interactions" value="11"/>
</dbReference>
<dbReference type="STRING" id="7227.FBpp0076090"/>
<dbReference type="MEROPS" id="M01.972"/>
<dbReference type="iPTMnet" id="Q24325"/>
<dbReference type="PaxDb" id="7227-FBpp0076090"/>
<dbReference type="EnsemblMetazoa" id="FBtr0076361">
    <property type="protein sequence ID" value="FBpp0076090"/>
    <property type="gene ID" value="FBgn0011836"/>
</dbReference>
<dbReference type="EnsemblMetazoa" id="FBtr0332688">
    <property type="protein sequence ID" value="FBpp0304934"/>
    <property type="gene ID" value="FBgn0011836"/>
</dbReference>
<dbReference type="GeneID" id="39164"/>
<dbReference type="KEGG" id="dme:Dmel_CG6711"/>
<dbReference type="AGR" id="FB:FBgn0011836"/>
<dbReference type="CTD" id="6873"/>
<dbReference type="FlyBase" id="FBgn0011836">
    <property type="gene designation" value="Taf2"/>
</dbReference>
<dbReference type="VEuPathDB" id="VectorBase:FBgn0011836"/>
<dbReference type="eggNOG" id="KOG1932">
    <property type="taxonomic scope" value="Eukaryota"/>
</dbReference>
<dbReference type="GeneTree" id="ENSGT00390000000420"/>
<dbReference type="HOGENOM" id="CLU_002317_0_0_1"/>
<dbReference type="InParanoid" id="Q24325"/>
<dbReference type="OMA" id="EQPDYQW"/>
<dbReference type="OrthoDB" id="308861at2759"/>
<dbReference type="PhylomeDB" id="Q24325"/>
<dbReference type="Reactome" id="R-DME-674695">
    <property type="pathway name" value="RNA Polymerase II Pre-transcription Events"/>
</dbReference>
<dbReference type="Reactome" id="R-DME-6804756">
    <property type="pathway name" value="Regulation of TP53 Activity through Phosphorylation"/>
</dbReference>
<dbReference type="Reactome" id="R-DME-73776">
    <property type="pathway name" value="RNA Polymerase II Promoter Escape"/>
</dbReference>
<dbReference type="Reactome" id="R-DME-73779">
    <property type="pathway name" value="RNA Polymerase II Transcription Pre-Initiation And Promoter Opening"/>
</dbReference>
<dbReference type="Reactome" id="R-DME-75953">
    <property type="pathway name" value="RNA Polymerase II Transcription Initiation"/>
</dbReference>
<dbReference type="Reactome" id="R-DME-76042">
    <property type="pathway name" value="RNA Polymerase II Transcription Initiation And Promoter Clearance"/>
</dbReference>
<dbReference type="BioGRID-ORCS" id="39164">
    <property type="hits" value="1 hit in 1 CRISPR screen"/>
</dbReference>
<dbReference type="ChiTaRS" id="Taf2">
    <property type="organism name" value="fly"/>
</dbReference>
<dbReference type="GenomeRNAi" id="39164"/>
<dbReference type="PRO" id="PR:Q24325"/>
<dbReference type="Proteomes" id="UP000000803">
    <property type="component" value="Chromosome 3L"/>
</dbReference>
<dbReference type="Bgee" id="FBgn0011836">
    <property type="expression patterns" value="Expressed in eye disc (Drosophila) and 71 other cell types or tissues"/>
</dbReference>
<dbReference type="ExpressionAtlas" id="Q24325">
    <property type="expression patterns" value="baseline and differential"/>
</dbReference>
<dbReference type="GO" id="GO:0005634">
    <property type="term" value="C:nucleus"/>
    <property type="evidence" value="ECO:0000314"/>
    <property type="project" value="FlyBase"/>
</dbReference>
<dbReference type="GO" id="GO:0005669">
    <property type="term" value="C:transcription factor TFIID complex"/>
    <property type="evidence" value="ECO:0000314"/>
    <property type="project" value="FlyBase"/>
</dbReference>
<dbReference type="GO" id="GO:0003682">
    <property type="term" value="F:chromatin binding"/>
    <property type="evidence" value="ECO:0000318"/>
    <property type="project" value="GO_Central"/>
</dbReference>
<dbReference type="GO" id="GO:0140296">
    <property type="term" value="F:general transcription initiation factor binding"/>
    <property type="evidence" value="ECO:0000353"/>
    <property type="project" value="FlyBase"/>
</dbReference>
<dbReference type="GO" id="GO:0000979">
    <property type="term" value="F:RNA polymerase II core promoter sequence-specific DNA binding"/>
    <property type="evidence" value="ECO:0000314"/>
    <property type="project" value="FlyBase"/>
</dbReference>
<dbReference type="GO" id="GO:0017025">
    <property type="term" value="F:TBP-class protein binding"/>
    <property type="evidence" value="ECO:0000353"/>
    <property type="project" value="FlyBase"/>
</dbReference>
<dbReference type="GO" id="GO:0000976">
    <property type="term" value="F:transcription cis-regulatory region binding"/>
    <property type="evidence" value="ECO:0000318"/>
    <property type="project" value="GO_Central"/>
</dbReference>
<dbReference type="GO" id="GO:0008270">
    <property type="term" value="F:zinc ion binding"/>
    <property type="evidence" value="ECO:0007669"/>
    <property type="project" value="InterPro"/>
</dbReference>
<dbReference type="GO" id="GO:0006352">
    <property type="term" value="P:DNA-templated transcription initiation"/>
    <property type="evidence" value="ECO:0000314"/>
    <property type="project" value="BHF-UCL"/>
</dbReference>
<dbReference type="GO" id="GO:0051123">
    <property type="term" value="P:RNA polymerase II preinitiation complex assembly"/>
    <property type="evidence" value="ECO:0000314"/>
    <property type="project" value="BHF-UCL"/>
</dbReference>
<dbReference type="GO" id="GO:0006366">
    <property type="term" value="P:transcription by RNA polymerase II"/>
    <property type="evidence" value="ECO:0000314"/>
    <property type="project" value="FlyBase"/>
</dbReference>
<dbReference type="GO" id="GO:0006367">
    <property type="term" value="P:transcription initiation at RNA polymerase II promoter"/>
    <property type="evidence" value="ECO:0000314"/>
    <property type="project" value="BHF-UCL"/>
</dbReference>
<dbReference type="CDD" id="cd09839">
    <property type="entry name" value="M1_like_TAF2"/>
    <property type="match status" value="1"/>
</dbReference>
<dbReference type="FunFam" id="2.60.40.1730:FF:000003">
    <property type="entry name" value="Transcription initiation factor TFIID subunit 2"/>
    <property type="match status" value="1"/>
</dbReference>
<dbReference type="FunFam" id="1.10.390.10:FF:000018">
    <property type="entry name" value="transcription initiation factor TFIID subunit 2"/>
    <property type="match status" value="1"/>
</dbReference>
<dbReference type="Gene3D" id="1.10.390.10">
    <property type="entry name" value="Neutral Protease Domain 2"/>
    <property type="match status" value="1"/>
</dbReference>
<dbReference type="Gene3D" id="2.60.40.1730">
    <property type="entry name" value="tricorn interacting facor f3 domain"/>
    <property type="match status" value="1"/>
</dbReference>
<dbReference type="InterPro" id="IPR042097">
    <property type="entry name" value="Aminopeptidase_N-like_N_sf"/>
</dbReference>
<dbReference type="InterPro" id="IPR016024">
    <property type="entry name" value="ARM-type_fold"/>
</dbReference>
<dbReference type="InterPro" id="IPR014782">
    <property type="entry name" value="Peptidase_M1_dom"/>
</dbReference>
<dbReference type="InterPro" id="IPR027268">
    <property type="entry name" value="Peptidase_M4/M1_CTD_sf"/>
</dbReference>
<dbReference type="InterPro" id="IPR037813">
    <property type="entry name" value="TAF2"/>
</dbReference>
<dbReference type="PANTHER" id="PTHR15137">
    <property type="entry name" value="TRANSCRIPTION INITIATION FACTOR TFIID"/>
    <property type="match status" value="1"/>
</dbReference>
<dbReference type="PANTHER" id="PTHR15137:SF9">
    <property type="entry name" value="TRANSCRIPTION INITIATION FACTOR TFIID SUBUNIT 2"/>
    <property type="match status" value="1"/>
</dbReference>
<dbReference type="Pfam" id="PF01433">
    <property type="entry name" value="Peptidase_M1"/>
    <property type="match status" value="1"/>
</dbReference>
<dbReference type="Pfam" id="PF25316">
    <property type="entry name" value="TAF2_3rd"/>
    <property type="match status" value="1"/>
</dbReference>
<dbReference type="SUPFAM" id="SSF48371">
    <property type="entry name" value="ARM repeat"/>
    <property type="match status" value="1"/>
</dbReference>
<dbReference type="SUPFAM" id="SSF63737">
    <property type="entry name" value="Leukotriene A4 hydrolase N-terminal domain"/>
    <property type="match status" value="1"/>
</dbReference>
<dbReference type="SUPFAM" id="SSF55486">
    <property type="entry name" value="Metalloproteases ('zincins'), catalytic domain"/>
    <property type="match status" value="1"/>
</dbReference>
<sequence length="1221" mass="139499">METQPEVPEVPLRPFKLAHQVVSLTGISFERRSIIGVVELTIVPNSENLRLIRLNAKQLRIYSVVLNDVCQADFTYFDPFQNICYKEHKSRALEVYSKHHLTAAQYTDPDVNNGELLIQVPPEGYSMIQEGQGLRIRIEFSLENPKCGVHFVIPPASTDEETQMNSSHMFTNCYENSSRLWFPCVDSFADPCTWRLEFTVDKNMTAVSCGELLEVIMTPDLRKKTFHYSVSTPVCAPNIALAVGQFEIYVDPHMHEVTHFCLPGLLPLLKNTVRYLHEAFEFYEETLSTRYPFSCYKQVFVDELDTDISAYATMSIASVNLLHSIAIIDQTYISRTFMSRAVAEQFFGCFITSHHWSDTWLAKGIAEYLCGLYSRKCFGNNEYRAWVQSELARVVRYEEQYGGIILDCSQPPAPLPVSGTNQSAASSKQQEIVHYFPIKSLHTVSPKYVEAMRRKAHFVIRMLENRIGQELLIQVFNKQLALASSAATTKIGAGLWSQLLISTNIFIKAIFTVTGKDMSVFMDQWVRTGGHAKFSLTSVFNRKRNTIELEIRQDYVNQRGIRKYNGPLMVQLQELDGTFKHTLQIESTLVKSDITCHSKSRRNKKKKIPLCTGEEVDMDLSAMDDSPVLWIRLDPEMILLRDLIIEQPDFQWQYQLRHERDVTAQFQAIQALQKYPTNATRLALTDTIESERCFYQVRCEAAHSLTKVANQMVASWSGPPAMLNIFRKFFGSFSAPHIIKLNNFSNFQLYFLQKAIPVAMAGLRTSHGICPPEVMRFLFDLFKYNENSRNHYTDAYYRAALVEALGETLTPVVSVAIHGTQITTDSLSTDAKLVLDEVTRLLNMEKHLPSYKYMVSVSCLKVIRKLQKFGHLPSLPHIYRSYAEYGIYLDLRIAAMECLVDFVKVDGRSEDLEHLITLLETDPDPAARHALAQLLIDNPPFTRESRSRLDKPNLVDRLWFSINRLPYDTKLRCDIVDLYYALYGTKRPNCLQAGENQSFYKDLMKDNNSSVGSVTGSFKKTSDSKSHLPTPTNTLDNEPQERQKPAMVTIKRTATEAFEVGDEIIKLERSEEITVLDEPVNVQAYDSETKVNALQADEEARDTHQAAKRLKNEMYAEDDNSSTMLDVGDSTRYESSHEEGKLKSGDGGLKKKKKKEKKKHKHKHKHRHSKDKDKDKDKERKDKDKRDPHISRLQARETATPDTLSSEDSSNSNSLPPMNLN</sequence>
<accession>Q24325</accession>
<accession>Q8SZR7</accession>
<accession>Q9VT64</accession>